<reference key="1">
    <citation type="journal article" date="2003" name="Mol. Microbiol.">
        <title>Genome-based analysis of virulence genes in a non-biofilm-forming Staphylococcus epidermidis strain (ATCC 12228).</title>
        <authorList>
            <person name="Zhang Y.-Q."/>
            <person name="Ren S.-X."/>
            <person name="Li H.-L."/>
            <person name="Wang Y.-X."/>
            <person name="Fu G."/>
            <person name="Yang J."/>
            <person name="Qin Z.-Q."/>
            <person name="Miao Y.-G."/>
            <person name="Wang W.-Y."/>
            <person name="Chen R.-S."/>
            <person name="Shen Y."/>
            <person name="Chen Z."/>
            <person name="Yuan Z.-H."/>
            <person name="Zhao G.-P."/>
            <person name="Qu D."/>
            <person name="Danchin A."/>
            <person name="Wen Y.-M."/>
        </authorList>
    </citation>
    <scope>NUCLEOTIDE SEQUENCE [LARGE SCALE GENOMIC DNA]</scope>
    <source>
        <strain>ATCC 12228 / FDA PCI 1200</strain>
    </source>
</reference>
<proteinExistence type="inferred from homology"/>
<gene>
    <name evidence="1" type="primary">hisI</name>
    <name evidence="1" type="synonym">hisIE</name>
    <name type="ordered locus">SE_0277</name>
</gene>
<organism>
    <name type="scientific">Staphylococcus epidermidis (strain ATCC 12228 / FDA PCI 1200)</name>
    <dbReference type="NCBI Taxonomy" id="176280"/>
    <lineage>
        <taxon>Bacteria</taxon>
        <taxon>Bacillati</taxon>
        <taxon>Bacillota</taxon>
        <taxon>Bacilli</taxon>
        <taxon>Bacillales</taxon>
        <taxon>Staphylococcaceae</taxon>
        <taxon>Staphylococcus</taxon>
    </lineage>
</organism>
<feature type="chain" id="PRO_0000136436" description="Histidine biosynthesis bifunctional protein HisIE">
    <location>
        <begin position="1"/>
        <end position="211"/>
    </location>
</feature>
<feature type="region of interest" description="Phosphoribosyl-AMP cyclohydrolase">
    <location>
        <begin position="1"/>
        <end position="107"/>
    </location>
</feature>
<feature type="region of interest" description="Phosphoribosyl-ATP pyrophosphohydrolase">
    <location>
        <begin position="108"/>
        <end position="211"/>
    </location>
</feature>
<dbReference type="EC" id="3.5.4.19" evidence="1"/>
<dbReference type="EC" id="3.6.1.31" evidence="1"/>
<dbReference type="EMBL" id="AE015929">
    <property type="protein sequence ID" value="AAO03874.1"/>
    <property type="molecule type" value="Genomic_DNA"/>
</dbReference>
<dbReference type="RefSeq" id="NP_763832.1">
    <property type="nucleotide sequence ID" value="NC_004461.1"/>
</dbReference>
<dbReference type="RefSeq" id="WP_001829420.1">
    <property type="nucleotide sequence ID" value="NZ_WBME01000037.1"/>
</dbReference>
<dbReference type="SMR" id="Q8CQ91"/>
<dbReference type="KEGG" id="sep:SE_0277"/>
<dbReference type="PATRIC" id="fig|176280.10.peg.255"/>
<dbReference type="eggNOG" id="COG0139">
    <property type="taxonomic scope" value="Bacteria"/>
</dbReference>
<dbReference type="eggNOG" id="COG0140">
    <property type="taxonomic scope" value="Bacteria"/>
</dbReference>
<dbReference type="HOGENOM" id="CLU_048577_3_1_9"/>
<dbReference type="OrthoDB" id="9795769at2"/>
<dbReference type="UniPathway" id="UPA00031">
    <property type="reaction ID" value="UER00007"/>
</dbReference>
<dbReference type="UniPathway" id="UPA00031">
    <property type="reaction ID" value="UER00008"/>
</dbReference>
<dbReference type="Proteomes" id="UP000001411">
    <property type="component" value="Chromosome"/>
</dbReference>
<dbReference type="GO" id="GO:0005737">
    <property type="term" value="C:cytoplasm"/>
    <property type="evidence" value="ECO:0007669"/>
    <property type="project" value="UniProtKB-SubCell"/>
</dbReference>
<dbReference type="GO" id="GO:0005524">
    <property type="term" value="F:ATP binding"/>
    <property type="evidence" value="ECO:0007669"/>
    <property type="project" value="UniProtKB-KW"/>
</dbReference>
<dbReference type="GO" id="GO:0004635">
    <property type="term" value="F:phosphoribosyl-AMP cyclohydrolase activity"/>
    <property type="evidence" value="ECO:0007669"/>
    <property type="project" value="UniProtKB-UniRule"/>
</dbReference>
<dbReference type="GO" id="GO:0004636">
    <property type="term" value="F:phosphoribosyl-ATP diphosphatase activity"/>
    <property type="evidence" value="ECO:0007669"/>
    <property type="project" value="UniProtKB-UniRule"/>
</dbReference>
<dbReference type="GO" id="GO:0000105">
    <property type="term" value="P:L-histidine biosynthetic process"/>
    <property type="evidence" value="ECO:0007669"/>
    <property type="project" value="UniProtKB-UniRule"/>
</dbReference>
<dbReference type="CDD" id="cd11534">
    <property type="entry name" value="NTP-PPase_HisIE_like"/>
    <property type="match status" value="1"/>
</dbReference>
<dbReference type="FunFam" id="3.10.20.810:FF:000001">
    <property type="entry name" value="Histidine biosynthesis bifunctional protein HisIE"/>
    <property type="match status" value="1"/>
</dbReference>
<dbReference type="Gene3D" id="1.10.287.1080">
    <property type="entry name" value="MazG-like"/>
    <property type="match status" value="1"/>
</dbReference>
<dbReference type="Gene3D" id="3.10.20.810">
    <property type="entry name" value="Phosphoribosyl-AMP cyclohydrolase"/>
    <property type="match status" value="1"/>
</dbReference>
<dbReference type="HAMAP" id="MF_01019">
    <property type="entry name" value="HisIE"/>
    <property type="match status" value="1"/>
</dbReference>
<dbReference type="InterPro" id="IPR023019">
    <property type="entry name" value="His_synth_HisIE"/>
</dbReference>
<dbReference type="InterPro" id="IPR008179">
    <property type="entry name" value="HisE"/>
</dbReference>
<dbReference type="InterPro" id="IPR021130">
    <property type="entry name" value="PRib-ATP_PPHydrolase-like"/>
</dbReference>
<dbReference type="InterPro" id="IPR002496">
    <property type="entry name" value="PRib_AMP_CycHydrolase_dom"/>
</dbReference>
<dbReference type="InterPro" id="IPR038019">
    <property type="entry name" value="PRib_AMP_CycHydrolase_sf"/>
</dbReference>
<dbReference type="NCBIfam" id="TIGR03188">
    <property type="entry name" value="histidine_hisI"/>
    <property type="match status" value="1"/>
</dbReference>
<dbReference type="NCBIfam" id="NF000768">
    <property type="entry name" value="PRK00051.1"/>
    <property type="match status" value="1"/>
</dbReference>
<dbReference type="NCBIfam" id="NF002747">
    <property type="entry name" value="PRK02759.1"/>
    <property type="match status" value="1"/>
</dbReference>
<dbReference type="PANTHER" id="PTHR42945">
    <property type="entry name" value="HISTIDINE BIOSYNTHESIS BIFUNCTIONAL PROTEIN"/>
    <property type="match status" value="1"/>
</dbReference>
<dbReference type="PANTHER" id="PTHR42945:SF9">
    <property type="entry name" value="HISTIDINE BIOSYNTHESIS BIFUNCTIONAL PROTEIN HISIE"/>
    <property type="match status" value="1"/>
</dbReference>
<dbReference type="Pfam" id="PF01502">
    <property type="entry name" value="PRA-CH"/>
    <property type="match status" value="1"/>
</dbReference>
<dbReference type="Pfam" id="PF01503">
    <property type="entry name" value="PRA-PH"/>
    <property type="match status" value="1"/>
</dbReference>
<dbReference type="SUPFAM" id="SSF101386">
    <property type="entry name" value="all-alpha NTP pyrophosphatases"/>
    <property type="match status" value="1"/>
</dbReference>
<dbReference type="SUPFAM" id="SSF141734">
    <property type="entry name" value="HisI-like"/>
    <property type="match status" value="1"/>
</dbReference>
<protein>
    <recommendedName>
        <fullName evidence="1">Histidine biosynthesis bifunctional protein HisIE</fullName>
    </recommendedName>
    <domain>
        <recommendedName>
            <fullName evidence="1">Phosphoribosyl-AMP cyclohydrolase</fullName>
            <shortName evidence="1">PRA-CH</shortName>
            <ecNumber evidence="1">3.5.4.19</ecNumber>
        </recommendedName>
    </domain>
    <domain>
        <recommendedName>
            <fullName evidence="1">Phosphoribosyl-ATP pyrophosphatase</fullName>
            <shortName evidence="1">PRA-PH</shortName>
            <ecNumber evidence="1">3.6.1.31</ecNumber>
        </recommendedName>
    </domain>
</protein>
<accession>Q8CQ91</accession>
<keyword id="KW-0028">Amino-acid biosynthesis</keyword>
<keyword id="KW-0067">ATP-binding</keyword>
<keyword id="KW-0963">Cytoplasm</keyword>
<keyword id="KW-0368">Histidine biosynthesis</keyword>
<keyword id="KW-0378">Hydrolase</keyword>
<keyword id="KW-0511">Multifunctional enzyme</keyword>
<keyword id="KW-0547">Nucleotide-binding</keyword>
<sequence>MNKLIDFSKGLVPVILQHAQTDSVLMLGYMNEEAYQKTLKEKKVTFFSRSKQRLWTKGETSGHFQHVESIHLDCDQDAILIKVMPQGPTCHTGSLSCFNSEIESRFKIQALAQTIHQSAKSNQSNSYTQYLLKEGIEKISKKFGEEAFEVVIGAIKHNREEVINETADVMYHLFVLLHSLDIPFSEVEQVLAHRHQKRNNFKGERKKVQEW</sequence>
<evidence type="ECO:0000255" key="1">
    <source>
        <dbReference type="HAMAP-Rule" id="MF_01019"/>
    </source>
</evidence>
<comment type="catalytic activity">
    <reaction evidence="1">
        <text>1-(5-phospho-beta-D-ribosyl)-ATP + H2O = 1-(5-phospho-beta-D-ribosyl)-5'-AMP + diphosphate + H(+)</text>
        <dbReference type="Rhea" id="RHEA:22828"/>
        <dbReference type="ChEBI" id="CHEBI:15377"/>
        <dbReference type="ChEBI" id="CHEBI:15378"/>
        <dbReference type="ChEBI" id="CHEBI:33019"/>
        <dbReference type="ChEBI" id="CHEBI:59457"/>
        <dbReference type="ChEBI" id="CHEBI:73183"/>
        <dbReference type="EC" id="3.6.1.31"/>
    </reaction>
</comment>
<comment type="catalytic activity">
    <reaction evidence="1">
        <text>1-(5-phospho-beta-D-ribosyl)-5'-AMP + H2O = 1-(5-phospho-beta-D-ribosyl)-5-[(5-phospho-beta-D-ribosylamino)methylideneamino]imidazole-4-carboxamide</text>
        <dbReference type="Rhea" id="RHEA:20049"/>
        <dbReference type="ChEBI" id="CHEBI:15377"/>
        <dbReference type="ChEBI" id="CHEBI:58435"/>
        <dbReference type="ChEBI" id="CHEBI:59457"/>
        <dbReference type="EC" id="3.5.4.19"/>
    </reaction>
</comment>
<comment type="pathway">
    <text evidence="1">Amino-acid biosynthesis; L-histidine biosynthesis; L-histidine from 5-phospho-alpha-D-ribose 1-diphosphate: step 2/9.</text>
</comment>
<comment type="pathway">
    <text evidence="1">Amino-acid biosynthesis; L-histidine biosynthesis; L-histidine from 5-phospho-alpha-D-ribose 1-diphosphate: step 3/9.</text>
</comment>
<comment type="subcellular location">
    <subcellularLocation>
        <location evidence="1">Cytoplasm</location>
    </subcellularLocation>
</comment>
<comment type="similarity">
    <text evidence="1">In the N-terminal section; belongs to the PRA-CH family.</text>
</comment>
<comment type="similarity">
    <text evidence="1">In the C-terminal section; belongs to the PRA-PH family.</text>
</comment>
<name>HIS2_STAES</name>